<name>MNTP_BACCQ</name>
<organism>
    <name type="scientific">Bacillus cereus (strain Q1)</name>
    <dbReference type="NCBI Taxonomy" id="361100"/>
    <lineage>
        <taxon>Bacteria</taxon>
        <taxon>Bacillati</taxon>
        <taxon>Bacillota</taxon>
        <taxon>Bacilli</taxon>
        <taxon>Bacillales</taxon>
        <taxon>Bacillaceae</taxon>
        <taxon>Bacillus</taxon>
        <taxon>Bacillus cereus group</taxon>
    </lineage>
</organism>
<reference key="1">
    <citation type="journal article" date="2009" name="J. Bacteriol.">
        <title>Complete genome sequence of the extremophilic Bacillus cereus strain Q1 with industrial applications.</title>
        <authorList>
            <person name="Xiong Z."/>
            <person name="Jiang Y."/>
            <person name="Qi D."/>
            <person name="Lu H."/>
            <person name="Yang F."/>
            <person name="Yang J."/>
            <person name="Chen L."/>
            <person name="Sun L."/>
            <person name="Xu X."/>
            <person name="Xue Y."/>
            <person name="Zhu Y."/>
            <person name="Jin Q."/>
        </authorList>
    </citation>
    <scope>NUCLEOTIDE SEQUENCE [LARGE SCALE GENOMIC DNA]</scope>
    <source>
        <strain>Q1</strain>
    </source>
</reference>
<proteinExistence type="inferred from homology"/>
<dbReference type="EMBL" id="CP000227">
    <property type="protein sequence ID" value="ACM15565.1"/>
    <property type="molecule type" value="Genomic_DNA"/>
</dbReference>
<dbReference type="KEGG" id="bcq:BCQ_5165"/>
<dbReference type="HOGENOM" id="CLU_096410_1_0_9"/>
<dbReference type="Proteomes" id="UP000000441">
    <property type="component" value="Chromosome"/>
</dbReference>
<dbReference type="GO" id="GO:0005886">
    <property type="term" value="C:plasma membrane"/>
    <property type="evidence" value="ECO:0007669"/>
    <property type="project" value="UniProtKB-SubCell"/>
</dbReference>
<dbReference type="GO" id="GO:0005384">
    <property type="term" value="F:manganese ion transmembrane transporter activity"/>
    <property type="evidence" value="ECO:0007669"/>
    <property type="project" value="UniProtKB-UniRule"/>
</dbReference>
<dbReference type="HAMAP" id="MF_01521">
    <property type="entry name" value="MntP_pump"/>
    <property type="match status" value="1"/>
</dbReference>
<dbReference type="InterPro" id="IPR003810">
    <property type="entry name" value="Mntp/YtaF"/>
</dbReference>
<dbReference type="InterPro" id="IPR022929">
    <property type="entry name" value="Put_MntP"/>
</dbReference>
<dbReference type="PANTHER" id="PTHR35529">
    <property type="entry name" value="MANGANESE EFFLUX PUMP MNTP-RELATED"/>
    <property type="match status" value="1"/>
</dbReference>
<dbReference type="PANTHER" id="PTHR35529:SF1">
    <property type="entry name" value="MANGANESE EFFLUX PUMP MNTP-RELATED"/>
    <property type="match status" value="1"/>
</dbReference>
<dbReference type="Pfam" id="PF02659">
    <property type="entry name" value="Mntp"/>
    <property type="match status" value="1"/>
</dbReference>
<feature type="chain" id="PRO_1000185103" description="Putative manganese efflux pump MntP">
    <location>
        <begin position="1"/>
        <end position="182"/>
    </location>
</feature>
<feature type="transmembrane region" description="Helical" evidence="1">
    <location>
        <begin position="6"/>
        <end position="26"/>
    </location>
</feature>
<feature type="transmembrane region" description="Helical" evidence="1">
    <location>
        <begin position="37"/>
        <end position="57"/>
    </location>
</feature>
<feature type="transmembrane region" description="Helical" evidence="1">
    <location>
        <begin position="71"/>
        <end position="91"/>
    </location>
</feature>
<feature type="transmembrane region" description="Helical" evidence="1">
    <location>
        <begin position="101"/>
        <end position="121"/>
    </location>
</feature>
<feature type="transmembrane region" description="Helical" evidence="1">
    <location>
        <begin position="131"/>
        <end position="151"/>
    </location>
</feature>
<feature type="transmembrane region" description="Helical" evidence="1">
    <location>
        <begin position="162"/>
        <end position="182"/>
    </location>
</feature>
<sequence>MTFEQLIPLIIMAFALGMDAFSVSLGMGMMALKIRQILYIGVTIGIFHIIMPFIGMVLGRFLSEQYGDIAHFAGAILLIGLGFYIVYSSILENEETRTAPIGISLFVFAFGVSIDSFSVGLSLGIYGAQTVITILLFGFISMLLAWTGLFIGRHAKGMLGTYGEIVGGIILVGFGLYLLFPI</sequence>
<evidence type="ECO:0000255" key="1">
    <source>
        <dbReference type="HAMAP-Rule" id="MF_01521"/>
    </source>
</evidence>
<keyword id="KW-1003">Cell membrane</keyword>
<keyword id="KW-0406">Ion transport</keyword>
<keyword id="KW-0464">Manganese</keyword>
<keyword id="KW-0472">Membrane</keyword>
<keyword id="KW-0812">Transmembrane</keyword>
<keyword id="KW-1133">Transmembrane helix</keyword>
<keyword id="KW-0813">Transport</keyword>
<gene>
    <name evidence="1" type="primary">mntP</name>
    <name type="ordered locus">BCQ_5165</name>
</gene>
<protein>
    <recommendedName>
        <fullName evidence="1">Putative manganese efflux pump MntP</fullName>
    </recommendedName>
</protein>
<comment type="function">
    <text evidence="1">Probably functions as a manganese efflux pump.</text>
</comment>
<comment type="subcellular location">
    <subcellularLocation>
        <location evidence="1">Cell membrane</location>
        <topology evidence="1">Multi-pass membrane protein</topology>
    </subcellularLocation>
</comment>
<comment type="similarity">
    <text evidence="1">Belongs to the MntP (TC 9.B.29) family.</text>
</comment>
<accession>B9IRV7</accession>